<keyword id="KW-0002">3D-structure</keyword>
<keyword id="KW-0025">Alternative splicing</keyword>
<keyword id="KW-0963">Cytoplasm</keyword>
<keyword id="KW-0217">Developmental protein</keyword>
<keyword id="KW-0221">Differentiation</keyword>
<keyword id="KW-0524">Neurogenesis</keyword>
<keyword id="KW-1267">Proteomics identification</keyword>
<keyword id="KW-1185">Reference proteome</keyword>
<comment type="function">
    <text evidence="1 9">May function as an adapter linking the Par3 complex to the GPSM1/GPSM2 complex (PubMed:16458856). Involved in spindle orientation during mitosis. May regulate cell proliferation and differentiation in the developing nervous system. May play a role in the asymmetric division of fibroblasts and participate in the process of stratification of the squamous epithelium (By similarity).</text>
</comment>
<comment type="subunit">
    <text evidence="3 4">Interacts with ALS2CR19/PAR3B and F2RL2/PAR3 (PubMed:16458856). Interacts with GPSM1/AGS3 and GPSM2/LGN (via TPR repeat region) (PubMed:16458856, PubMed:22074847). Identified in a complex with GPSM2 and F2RL2 (PubMed:16458856).</text>
</comment>
<comment type="interaction">
    <interactant intactId="EBI-12081118">
        <id>Q1MX18</id>
    </interactant>
    <interactant intactId="EBI-744104">
        <id>P55040</id>
        <label>GEM</label>
    </interactant>
    <organismsDiffer>false</organismsDiffer>
    <experiments>3</experiments>
</comment>
<comment type="interaction">
    <interactant intactId="EBI-12081118">
        <id>Q1MX18</id>
    </interactant>
    <interactant intactId="EBI-751540">
        <id>O95872</id>
        <label>GPANK1</label>
    </interactant>
    <organismsDiffer>false</organismsDiffer>
    <experiments>3</experiments>
</comment>
<comment type="interaction">
    <interactant intactId="EBI-12081118">
        <id>Q1MX18</id>
    </interactant>
    <interactant intactId="EBI-618655">
        <id>P81274</id>
        <label>GPSM2</label>
    </interactant>
    <organismsDiffer>false</organismsDiffer>
    <experiments>4</experiments>
</comment>
<comment type="interaction">
    <interactant intactId="EBI-12081118">
        <id>Q1MX18</id>
    </interactant>
    <interactant intactId="EBI-12039345">
        <id>Q9UBR4-2</id>
        <label>LHX3</label>
    </interactant>
    <organismsDiffer>false</organismsDiffer>
    <experiments>3</experiments>
</comment>
<comment type="interaction">
    <interactant intactId="EBI-12081118">
        <id>Q1MX18</id>
    </interactant>
    <interactant intactId="EBI-14086479">
        <id>Q8IVT4</id>
        <label>MGC50722</label>
    </interactant>
    <organismsDiffer>false</organismsDiffer>
    <experiments>3</experiments>
</comment>
<comment type="interaction">
    <interactant intactId="EBI-12081118">
        <id>Q1MX18</id>
    </interactant>
    <interactant intactId="EBI-11986293">
        <id>P0CG20</id>
        <label>PRR35</label>
    </interactant>
    <organismsDiffer>false</organismsDiffer>
    <experiments>3</experiments>
</comment>
<comment type="interaction">
    <interactant intactId="EBI-12081118">
        <id>Q1MX18</id>
    </interactant>
    <interactant intactId="EBI-6257312">
        <id>Q9BVN2</id>
        <label>RUSC1</label>
    </interactant>
    <organismsDiffer>false</organismsDiffer>
    <experiments>3</experiments>
</comment>
<comment type="interaction">
    <interactant intactId="EBI-12081118">
        <id>Q1MX18</id>
    </interactant>
    <interactant intactId="EBI-358489">
        <id>Q96GM5</id>
        <label>SMARCD1</label>
    </interactant>
    <organismsDiffer>false</organismsDiffer>
    <experiments>3</experiments>
</comment>
<comment type="interaction">
    <interactant intactId="EBI-12081118">
        <id>Q1MX18</id>
    </interactant>
    <interactant intactId="EBI-741237">
        <id>O60504</id>
        <label>SORBS3</label>
    </interactant>
    <organismsDiffer>false</organismsDiffer>
    <experiments>3</experiments>
</comment>
<comment type="interaction">
    <interactant intactId="EBI-12081118">
        <id>Q1MX18</id>
    </interactant>
    <interactant intactId="EBI-8644516">
        <id>Q9BXF9</id>
        <label>TEKT3</label>
    </interactant>
    <organismsDiffer>false</organismsDiffer>
    <experiments>5</experiments>
</comment>
<comment type="interaction">
    <interactant intactId="EBI-12081118">
        <id>Q1MX18</id>
    </interactant>
    <interactant intactId="EBI-9090990">
        <id>Q5W5X9-3</id>
        <label>TTC23</label>
    </interactant>
    <organismsDiffer>false</organismsDiffer>
    <experiments>3</experiments>
</comment>
<comment type="interaction">
    <interactant intactId="EBI-12081118">
        <id>Q1MX18</id>
    </interactant>
    <interactant intactId="EBI-11975223">
        <id>Q70EL1-9</id>
        <label>USP54</label>
    </interactant>
    <organismsDiffer>false</organismsDiffer>
    <experiments>3</experiments>
</comment>
<comment type="interaction">
    <interactant intactId="EBI-12081118">
        <id>Q1MX18</id>
    </interactant>
    <interactant intactId="EBI-6427977">
        <id>Q96SQ5</id>
        <label>ZNF587</label>
    </interactant>
    <organismsDiffer>false</organismsDiffer>
    <experiments>3</experiments>
</comment>
<comment type="subcellular location">
    <subcellularLocation>
        <location evidence="4">Cytoplasm</location>
    </subcellularLocation>
    <subcellularLocation>
        <location evidence="4">Cytoplasm</location>
        <location evidence="4">Cell cortex</location>
    </subcellularLocation>
    <text evidence="4">Uniformly distributed in the cytoplasm during interphase. During metaphase, detected in the cell cortex, adjacent to the mitotic spindle poles.</text>
</comment>
<comment type="alternative products">
    <event type="alternative splicing"/>
    <isoform>
        <id>Q1MX18-1</id>
        <name>1</name>
        <name>Long</name>
        <sequence type="displayed"/>
    </isoform>
    <isoform>
        <id>Q1MX18-2</id>
        <name>2</name>
        <name>Short</name>
        <sequence type="described" ref="VSP_020947"/>
    </isoform>
    <isoform>
        <id>Q1MX18-3</id>
        <name>3</name>
        <sequence type="described" ref="VSP_020946 VSP_020948 VSP_020950"/>
    </isoform>
    <isoform>
        <id>Q1MX18-4</id>
        <name>4</name>
        <sequence type="described" ref="VSP_020947 VSP_020950"/>
    </isoform>
    <isoform>
        <id>Q1MX18-5</id>
        <name>5</name>
        <sequence type="described" ref="VSP_020947 VSP_020949"/>
    </isoform>
    <isoform>
        <id>Q1MX18-6</id>
        <name>6</name>
        <sequence type="described" ref="VSP_020947 VSP_054159"/>
    </isoform>
</comment>
<comment type="tissue specificity">
    <text evidence="2 3">Isoform 1 is expressed in various tissues with stronger expression in liver, kidney and small intestine. Isoform 2 is abundantly expressed in small intestine and to a lower extent in lung and pancreas.</text>
</comment>
<comment type="developmental stage">
    <text evidence="2">Expressed in fetal cochlea.</text>
</comment>
<evidence type="ECO:0000250" key="1">
    <source>
        <dbReference type="UniProtKB" id="Q3HNM7"/>
    </source>
</evidence>
<evidence type="ECO:0000269" key="2">
    <source>
    </source>
</evidence>
<evidence type="ECO:0000269" key="3">
    <source>
    </source>
</evidence>
<evidence type="ECO:0000269" key="4">
    <source>
    </source>
</evidence>
<evidence type="ECO:0000303" key="5">
    <source>
    </source>
</evidence>
<evidence type="ECO:0000303" key="6">
    <source>
    </source>
</evidence>
<evidence type="ECO:0000303" key="7">
    <source ref="2"/>
</evidence>
<evidence type="ECO:0000305" key="8"/>
<evidence type="ECO:0000305" key="9">
    <source>
    </source>
</evidence>
<evidence type="ECO:0007744" key="10">
    <source>
        <dbReference type="PDB" id="3SF4"/>
    </source>
</evidence>
<evidence type="ECO:0007829" key="11">
    <source>
        <dbReference type="PDB" id="3SF4"/>
    </source>
</evidence>
<feature type="chain" id="PRO_0000252405" description="Protein inscuteable homolog">
    <location>
        <begin position="1"/>
        <end position="579"/>
    </location>
</feature>
<feature type="region of interest" description="Important for interaction with GPSM2" evidence="4">
    <location>
        <begin position="74"/>
        <end position="89"/>
    </location>
</feature>
<feature type="short sequence motif" description="PDZ-binding">
    <location>
        <begin position="576"/>
        <end position="579"/>
    </location>
</feature>
<feature type="splice variant" id="VSP_020946" description="In isoform 3." evidence="7">
    <location>
        <begin position="1"/>
        <end position="203"/>
    </location>
</feature>
<feature type="splice variant" id="VSP_020947" description="In isoform 2, isoform 4, isoform 5 and isoform 6." evidence="5 6 7">
    <location>
        <begin position="1"/>
        <end position="47"/>
    </location>
</feature>
<feature type="splice variant" id="VSP_020948" description="In isoform 3." evidence="7">
    <original>ENEHVLKSMKACVSETLSMLGQHFGQLLELALTRE</original>
    <variation>MRREWEARMETHSPIWQNLLMRLDNCLALRLQSPL</variation>
    <location>
        <begin position="204"/>
        <end position="238"/>
    </location>
</feature>
<feature type="splice variant" id="VSP_020949" description="In isoform 5." evidence="7">
    <original>V</original>
    <variation>VQVESHSVTRLECSGAISAQCNLRLPGSSDSPASAS</variation>
    <location>
        <position position="239"/>
    </location>
</feature>
<feature type="splice variant" id="VSP_020950" description="In isoform 3 and isoform 4." evidence="7">
    <location>
        <begin position="278"/>
        <end position="319"/>
    </location>
</feature>
<feature type="splice variant" id="VSP_054159" description="In isoform 6." evidence="5">
    <original>ALRRLAGVCPEGLQDSDFQQLVQPRLVDSFLLCSNMEESFV</original>
    <variation>MGIQLQVKKTNISALLLWFLFWHIQGCSA</variation>
    <location>
        <begin position="539"/>
        <end position="579"/>
    </location>
</feature>
<feature type="sequence variant" id="VAR_051073" description="In dbSNP:rs17507577.">
    <original>D</original>
    <variation>N</variation>
    <location>
        <position position="333"/>
    </location>
</feature>
<feature type="sequence variant" id="VAR_027852" description="In dbSNP:rs7123855.">
    <original>Q</original>
    <variation>R</variation>
    <location>
        <position position="450"/>
    </location>
</feature>
<feature type="mutagenesis site" description="Abolishes interaction with GPSM2." evidence="4">
    <original>W</original>
    <variation>A</variation>
    <location>
        <position position="78"/>
    </location>
</feature>
<feature type="mutagenesis site" description="Strongly reduces interaction with GPSM2. Abolishes interaction with GPSM2 and GPSM1; when associated with D-97." evidence="4">
    <original>E</original>
    <variation>R</variation>
    <location>
        <position position="89"/>
    </location>
</feature>
<feature type="mutagenesis site" description="Abolishes interaction with GPSM2 and GPSM1; when associated with R-89." evidence="4">
    <original>K</original>
    <variation>D</variation>
    <location>
        <position position="97"/>
    </location>
</feature>
<feature type="sequence conflict" description="In Ref. 2; BAE17134." evidence="8" ref="2">
    <original>M</original>
    <variation>T</variation>
    <location>
        <position position="212"/>
    </location>
</feature>
<feature type="sequence conflict" description="In Ref. 2; BAE17135." evidence="8" ref="2">
    <original>V</original>
    <variation>M</variation>
    <location>
        <position position="216"/>
    </location>
</feature>
<feature type="sequence conflict" description="In Ref. 2; BAE17133." evidence="8" ref="2">
    <original>H</original>
    <variation>R</variation>
    <location>
        <position position="226"/>
    </location>
</feature>
<feature type="sequence conflict" description="In Ref. 2; BAE17134." evidence="8" ref="2">
    <original>N</original>
    <variation>D</variation>
    <location>
        <position position="251"/>
    </location>
</feature>
<feature type="sequence conflict" description="In Ref. 2; BAE17135." evidence="8" ref="2">
    <original>M</original>
    <variation>T</variation>
    <location>
        <position position="513"/>
    </location>
</feature>
<feature type="sequence conflict" description="In Ref. 2; BAE17136." evidence="8" ref="2">
    <original>SF</original>
    <variation>GS</variation>
    <location>
        <begin position="577"/>
        <end position="578"/>
    </location>
</feature>
<feature type="helix" evidence="11">
    <location>
        <begin position="73"/>
        <end position="82"/>
    </location>
</feature>
<feature type="strand" evidence="11">
    <location>
        <begin position="91"/>
        <end position="95"/>
    </location>
</feature>
<feature type="helix" evidence="11">
    <location>
        <begin position="103"/>
        <end position="105"/>
    </location>
</feature>
<feature type="strand" evidence="11">
    <location>
        <begin position="109"/>
        <end position="112"/>
    </location>
</feature>
<dbReference type="EMBL" id="AB236158">
    <property type="protein sequence ID" value="BAE93463.1"/>
    <property type="molecule type" value="mRNA"/>
</dbReference>
<dbReference type="EMBL" id="AB236159">
    <property type="protein sequence ID" value="BAE93464.1"/>
    <property type="molecule type" value="mRNA"/>
</dbReference>
<dbReference type="EMBL" id="AB231744">
    <property type="protein sequence ID" value="BAE46891.1"/>
    <property type="molecule type" value="mRNA"/>
</dbReference>
<dbReference type="EMBL" id="AB231745">
    <property type="protein sequence ID" value="BAE17133.1"/>
    <property type="molecule type" value="mRNA"/>
</dbReference>
<dbReference type="EMBL" id="AB231746">
    <property type="protein sequence ID" value="BAE17134.1"/>
    <property type="molecule type" value="mRNA"/>
</dbReference>
<dbReference type="EMBL" id="AB231747">
    <property type="protein sequence ID" value="BAE17135.1"/>
    <property type="molecule type" value="mRNA"/>
</dbReference>
<dbReference type="EMBL" id="AB231748">
    <property type="protein sequence ID" value="BAE17136.1"/>
    <property type="molecule type" value="mRNA"/>
</dbReference>
<dbReference type="EMBL" id="AC090744">
    <property type="status" value="NOT_ANNOTATED_CDS"/>
    <property type="molecule type" value="Genomic_DNA"/>
</dbReference>
<dbReference type="EMBL" id="BC127700">
    <property type="protein sequence ID" value="AAI27701.1"/>
    <property type="molecule type" value="mRNA"/>
</dbReference>
<dbReference type="CCDS" id="CCDS41621.1">
    <molecule id="Q1MX18-1"/>
</dbReference>
<dbReference type="CCDS" id="CCDS41622.1">
    <molecule id="Q1MX18-2"/>
</dbReference>
<dbReference type="CCDS" id="CCDS60735.1">
    <molecule id="Q1MX18-6"/>
</dbReference>
<dbReference type="CCDS" id="CCDS60736.1">
    <molecule id="Q1MX18-4"/>
</dbReference>
<dbReference type="RefSeq" id="NP_001027024.3">
    <molecule id="Q1MX18-1"/>
    <property type="nucleotide sequence ID" value="NM_001031853.5"/>
</dbReference>
<dbReference type="RefSeq" id="NP_001036001.1">
    <molecule id="Q1MX18-2"/>
    <property type="nucleotide sequence ID" value="NM_001042536.3"/>
</dbReference>
<dbReference type="RefSeq" id="NP_001265242.1">
    <molecule id="Q1MX18-2"/>
    <property type="nucleotide sequence ID" value="NM_001278313.2"/>
</dbReference>
<dbReference type="RefSeq" id="NP_001265243.1">
    <property type="nucleotide sequence ID" value="NM_001278314.1"/>
</dbReference>
<dbReference type="RefSeq" id="NP_001265244.1">
    <molecule id="Q1MX18-6"/>
    <property type="nucleotide sequence ID" value="NM_001278315.2"/>
</dbReference>
<dbReference type="RefSeq" id="NP_001265245.1">
    <molecule id="Q1MX18-4"/>
    <property type="nucleotide sequence ID" value="NM_001278316.2"/>
</dbReference>
<dbReference type="RefSeq" id="XP_006718290.1">
    <molecule id="Q1MX18-2"/>
    <property type="nucleotide sequence ID" value="XM_006718227.3"/>
</dbReference>
<dbReference type="RefSeq" id="XP_011518388.1">
    <molecule id="Q1MX18-6"/>
    <property type="nucleotide sequence ID" value="XM_011520086.2"/>
</dbReference>
<dbReference type="RefSeq" id="XP_016873186.1">
    <molecule id="Q1MX18-2"/>
    <property type="nucleotide sequence ID" value="XM_017017697.2"/>
</dbReference>
<dbReference type="RefSeq" id="XP_054224707.1">
    <molecule id="Q1MX18-2"/>
    <property type="nucleotide sequence ID" value="XM_054368732.1"/>
</dbReference>
<dbReference type="RefSeq" id="XP_054224708.1">
    <molecule id="Q1MX18-2"/>
    <property type="nucleotide sequence ID" value="XM_054368733.1"/>
</dbReference>
<dbReference type="RefSeq" id="XP_054224710.1">
    <molecule id="Q1MX18-6"/>
    <property type="nucleotide sequence ID" value="XM_054368735.1"/>
</dbReference>
<dbReference type="PDB" id="3SF4">
    <property type="method" value="X-ray"/>
    <property type="resolution" value="2.60 A"/>
    <property type="chains" value="D/E/F=70-116"/>
</dbReference>
<dbReference type="PDBsum" id="3SF4"/>
<dbReference type="SMR" id="Q1MX18"/>
<dbReference type="BioGRID" id="132426">
    <property type="interactions" value="38"/>
</dbReference>
<dbReference type="CORUM" id="Q1MX18"/>
<dbReference type="FunCoup" id="Q1MX18">
    <property type="interactions" value="15"/>
</dbReference>
<dbReference type="IntAct" id="Q1MX18">
    <property type="interactions" value="26"/>
</dbReference>
<dbReference type="STRING" id="9606.ENSP00000368872"/>
<dbReference type="iPTMnet" id="Q1MX18"/>
<dbReference type="PhosphoSitePlus" id="Q1MX18"/>
<dbReference type="BioMuta" id="INSC"/>
<dbReference type="DMDM" id="116248172"/>
<dbReference type="MassIVE" id="Q1MX18"/>
<dbReference type="PaxDb" id="9606-ENSP00000368872"/>
<dbReference type="PeptideAtlas" id="Q1MX18"/>
<dbReference type="ProteomicsDB" id="61231">
    <molecule id="Q1MX18-1"/>
</dbReference>
<dbReference type="ProteomicsDB" id="61232">
    <molecule id="Q1MX18-2"/>
</dbReference>
<dbReference type="ProteomicsDB" id="61234">
    <molecule id="Q1MX18-4"/>
</dbReference>
<dbReference type="ProteomicsDB" id="61235">
    <molecule id="Q1MX18-5"/>
</dbReference>
<dbReference type="ProteomicsDB" id="69"/>
<dbReference type="Antibodypedia" id="48935">
    <property type="antibodies" value="189 antibodies from 22 providers"/>
</dbReference>
<dbReference type="DNASU" id="387755"/>
<dbReference type="Ensembl" id="ENST00000379554.7">
    <molecule id="Q1MX18-1"/>
    <property type="protein sequence ID" value="ENSP00000368872.3"/>
    <property type="gene ID" value="ENSG00000188487.12"/>
</dbReference>
<dbReference type="Ensembl" id="ENST00000379556.8">
    <molecule id="Q1MX18-2"/>
    <property type="protein sequence ID" value="ENSP00000368874.3"/>
    <property type="gene ID" value="ENSG00000188487.12"/>
</dbReference>
<dbReference type="Ensembl" id="ENST00000525218.1">
    <molecule id="Q1MX18-4"/>
    <property type="protein sequence ID" value="ENSP00000436113.1"/>
    <property type="gene ID" value="ENSG00000188487.12"/>
</dbReference>
<dbReference type="Ensembl" id="ENST00000528567.5">
    <molecule id="Q1MX18-6"/>
    <property type="protein sequence ID" value="ENSP00000435022.1"/>
    <property type="gene ID" value="ENSG00000188487.12"/>
</dbReference>
<dbReference type="Ensembl" id="ENST00000530161.5">
    <molecule id="Q1MX18-2"/>
    <property type="protein sequence ID" value="ENSP00000436194.1"/>
    <property type="gene ID" value="ENSG00000188487.12"/>
</dbReference>
<dbReference type="GeneID" id="387755"/>
<dbReference type="KEGG" id="hsa:387755"/>
<dbReference type="MANE-Select" id="ENST00000379556.8">
    <molecule id="Q1MX18-2"/>
    <property type="protein sequence ID" value="ENSP00000368874.3"/>
    <property type="RefSeq nucleotide sequence ID" value="NM_001042536.3"/>
    <property type="RefSeq protein sequence ID" value="NP_001036001.1"/>
</dbReference>
<dbReference type="UCSC" id="uc001mly.5">
    <molecule id="Q1MX18-1"/>
    <property type="organism name" value="human"/>
</dbReference>
<dbReference type="AGR" id="HGNC:33116"/>
<dbReference type="CTD" id="387755"/>
<dbReference type="DisGeNET" id="387755"/>
<dbReference type="GeneCards" id="INSC"/>
<dbReference type="HGNC" id="HGNC:33116">
    <property type="gene designation" value="INSC"/>
</dbReference>
<dbReference type="HPA" id="ENSG00000188487">
    <property type="expression patterns" value="Tissue enriched (parathyroid)"/>
</dbReference>
<dbReference type="MIM" id="610668">
    <property type="type" value="gene"/>
</dbReference>
<dbReference type="neXtProt" id="NX_Q1MX18"/>
<dbReference type="OpenTargets" id="ENSG00000188487"/>
<dbReference type="PharmGKB" id="PA162392191"/>
<dbReference type="VEuPathDB" id="HostDB:ENSG00000188487"/>
<dbReference type="eggNOG" id="ENOG502QRY2">
    <property type="taxonomic scope" value="Eukaryota"/>
</dbReference>
<dbReference type="GeneTree" id="ENSGT00390000001511"/>
<dbReference type="InParanoid" id="Q1MX18"/>
<dbReference type="OrthoDB" id="5796379at2759"/>
<dbReference type="PAN-GO" id="Q1MX18">
    <property type="GO annotations" value="5 GO annotations based on evolutionary models"/>
</dbReference>
<dbReference type="PhylomeDB" id="Q1MX18"/>
<dbReference type="TreeFam" id="TF323559"/>
<dbReference type="PathwayCommons" id="Q1MX18"/>
<dbReference type="SignaLink" id="Q1MX18"/>
<dbReference type="BioGRID-ORCS" id="387755">
    <property type="hits" value="9 hits in 1148 CRISPR screens"/>
</dbReference>
<dbReference type="ChiTaRS" id="INSC">
    <property type="organism name" value="human"/>
</dbReference>
<dbReference type="GenomeRNAi" id="387755"/>
<dbReference type="Pharos" id="Q1MX18">
    <property type="development level" value="Tbio"/>
</dbReference>
<dbReference type="PRO" id="PR:Q1MX18"/>
<dbReference type="Proteomes" id="UP000005640">
    <property type="component" value="Chromosome 11"/>
</dbReference>
<dbReference type="RNAct" id="Q1MX18">
    <property type="molecule type" value="protein"/>
</dbReference>
<dbReference type="Bgee" id="ENSG00000188487">
    <property type="expression patterns" value="Expressed in tibia and 106 other cell types or tissues"/>
</dbReference>
<dbReference type="ExpressionAtlas" id="Q1MX18">
    <property type="expression patterns" value="baseline and differential"/>
</dbReference>
<dbReference type="GO" id="GO:0045179">
    <property type="term" value="C:apical cortex"/>
    <property type="evidence" value="ECO:0000318"/>
    <property type="project" value="GO_Central"/>
</dbReference>
<dbReference type="GO" id="GO:0005886">
    <property type="term" value="C:plasma membrane"/>
    <property type="evidence" value="ECO:0000315"/>
    <property type="project" value="UniProtKB"/>
</dbReference>
<dbReference type="GO" id="GO:0032991">
    <property type="term" value="C:protein-containing complex"/>
    <property type="evidence" value="ECO:0000314"/>
    <property type="project" value="UniProtKB"/>
</dbReference>
<dbReference type="GO" id="GO:0008093">
    <property type="term" value="F:cytoskeletal anchor activity"/>
    <property type="evidence" value="ECO:0000318"/>
    <property type="project" value="GO_Central"/>
</dbReference>
<dbReference type="GO" id="GO:0019904">
    <property type="term" value="F:protein domain specific binding"/>
    <property type="evidence" value="ECO:0000353"/>
    <property type="project" value="UniProtKB"/>
</dbReference>
<dbReference type="GO" id="GO:0030674">
    <property type="term" value="F:protein-macromolecule adaptor activity"/>
    <property type="evidence" value="ECO:0000353"/>
    <property type="project" value="UniProtKB"/>
</dbReference>
<dbReference type="GO" id="GO:0045176">
    <property type="term" value="P:apical protein localization"/>
    <property type="evidence" value="ECO:0000318"/>
    <property type="project" value="GO_Central"/>
</dbReference>
<dbReference type="GO" id="GO:0008356">
    <property type="term" value="P:asymmetric cell division"/>
    <property type="evidence" value="ECO:0007669"/>
    <property type="project" value="InterPro"/>
</dbReference>
<dbReference type="GO" id="GO:0030154">
    <property type="term" value="P:cell differentiation"/>
    <property type="evidence" value="ECO:0007669"/>
    <property type="project" value="UniProtKB-KW"/>
</dbReference>
<dbReference type="GO" id="GO:0007399">
    <property type="term" value="P:nervous system development"/>
    <property type="evidence" value="ECO:0007669"/>
    <property type="project" value="UniProtKB-KW"/>
</dbReference>
<dbReference type="GO" id="GO:0009786">
    <property type="term" value="P:regulation of asymmetric cell division"/>
    <property type="evidence" value="ECO:0000318"/>
    <property type="project" value="GO_Central"/>
</dbReference>
<dbReference type="GO" id="GO:0031647">
    <property type="term" value="P:regulation of protein stability"/>
    <property type="evidence" value="ECO:0000314"/>
    <property type="project" value="UniProtKB"/>
</dbReference>
<dbReference type="CDD" id="cd21966">
    <property type="entry name" value="INSC_LBD"/>
    <property type="match status" value="1"/>
</dbReference>
<dbReference type="FunFam" id="1.25.10.10:FF:000188">
    <property type="entry name" value="protein inscuteable homolog isoform X1"/>
    <property type="match status" value="1"/>
</dbReference>
<dbReference type="Gene3D" id="6.20.200.10">
    <property type="entry name" value="Inscuteable LGN-binding domain"/>
    <property type="match status" value="1"/>
</dbReference>
<dbReference type="Gene3D" id="1.25.10.10">
    <property type="entry name" value="Leucine-rich Repeat Variant"/>
    <property type="match status" value="1"/>
</dbReference>
<dbReference type="IDEAL" id="IID00323"/>
<dbReference type="InterPro" id="IPR011989">
    <property type="entry name" value="ARM-like"/>
</dbReference>
<dbReference type="InterPro" id="IPR016024">
    <property type="entry name" value="ARM-type_fold"/>
</dbReference>
<dbReference type="InterPro" id="IPR000225">
    <property type="entry name" value="Armadillo"/>
</dbReference>
<dbReference type="InterPro" id="IPR045789">
    <property type="entry name" value="Insc_C"/>
</dbReference>
<dbReference type="InterPro" id="IPR031938">
    <property type="entry name" value="INSC_LBD"/>
</dbReference>
<dbReference type="InterPro" id="IPR038205">
    <property type="entry name" value="INSC_LBD_sf"/>
</dbReference>
<dbReference type="InterPro" id="IPR039921">
    <property type="entry name" value="Inscuteable"/>
</dbReference>
<dbReference type="PANTHER" id="PTHR21386">
    <property type="entry name" value="INSCUTEABLE"/>
    <property type="match status" value="1"/>
</dbReference>
<dbReference type="PANTHER" id="PTHR21386:SF0">
    <property type="entry name" value="PROTEIN INSCUTEABLE HOMOLOG"/>
    <property type="match status" value="1"/>
</dbReference>
<dbReference type="Pfam" id="PF19427">
    <property type="entry name" value="Insc_C"/>
    <property type="match status" value="1"/>
</dbReference>
<dbReference type="Pfam" id="PF16748">
    <property type="entry name" value="INSC_LBD"/>
    <property type="match status" value="1"/>
</dbReference>
<dbReference type="SMART" id="SM00185">
    <property type="entry name" value="ARM"/>
    <property type="match status" value="3"/>
</dbReference>
<dbReference type="SUPFAM" id="SSF48371">
    <property type="entry name" value="ARM repeat"/>
    <property type="match status" value="1"/>
</dbReference>
<sequence length="579" mass="63469">MRRPPGNGEAASEGPGGWGLWGVQESRRLCCAGHDRCKQALLQIGINMMALPGGRHLDSVTLPGQRLHLMQVDSVQRWMEDLKLMTECECMCVLQAKPISLEEDAQGDLILAGGPGPGDPLQLLLKRGWVISTELRRIGQKLAQDRWARVHSMSVRLTCHARSMVSEYSAVSRNSLKEMGEIEKLLMEKCSELSAVTERCLQVENEHVLKSMKACVSETLSMLGQHFGQLLELALTREVQALVRKIDASDNIYTTESTTGNLFSLTQEGAPLCRIIAKEGGVVALFKVCRQDSFRCLYPQALRTLASICCVEEGVHQLEKVDGVLCLADILTDNSHSEATRAEAAAVVAQVTSPHLPVTQHLSSFLESMEEIVTALVKLCQEASSGEVFLLASAALANITFFDTMACEMLLQLNAIRVLLEACSDKQRVDTPYTRDQIVTILANMSVLEQCASDIIQENGVQLIMGMLSEKPRSGTPAEVAACERVQQKAAVTLARLSRDPDVAREAVRLSCMSRLIELCRSPSERNSSDAVLVACLAALRRLAGVCPEGLQDSDFQQLVQPRLVDSFLLCSNMEESFV</sequence>
<organism>
    <name type="scientific">Homo sapiens</name>
    <name type="common">Human</name>
    <dbReference type="NCBI Taxonomy" id="9606"/>
    <lineage>
        <taxon>Eukaryota</taxon>
        <taxon>Metazoa</taxon>
        <taxon>Chordata</taxon>
        <taxon>Craniata</taxon>
        <taxon>Vertebrata</taxon>
        <taxon>Euteleostomi</taxon>
        <taxon>Mammalia</taxon>
        <taxon>Eutheria</taxon>
        <taxon>Euarchontoglires</taxon>
        <taxon>Primates</taxon>
        <taxon>Haplorrhini</taxon>
        <taxon>Catarrhini</taxon>
        <taxon>Hominidae</taxon>
        <taxon>Homo</taxon>
    </lineage>
</organism>
<proteinExistence type="evidence at protein level"/>
<gene>
    <name type="primary">INSC</name>
</gene>
<name>INSC_HUMAN</name>
<accession>Q1MX18</accession>
<accession>A0PJX5</accession>
<accession>Q1MX19</accession>
<accession>Q3C1V6</accession>
<accession>Q4AC95</accession>
<accession>Q4AC96</accession>
<accession>Q4AC97</accession>
<accession>Q4AC98</accession>
<protein>
    <recommendedName>
        <fullName>Protein inscuteable homolog</fullName>
    </recommendedName>
</protein>
<reference key="1">
    <citation type="journal article" date="2006" name="Biochem. Biophys. Res. Commun.">
        <title>Two forms of human Inscuteable-related protein that links Par3 to the Pins homologues LGN and AGS3.</title>
        <authorList>
            <person name="Izaki T."/>
            <person name="Kamakura S."/>
            <person name="Kohjima M."/>
            <person name="Sumimoto H."/>
        </authorList>
    </citation>
    <scope>NUCLEOTIDE SEQUENCE [MRNA] (ISOFORMS 1 AND 2)</scope>
    <scope>FUNCTION</scope>
    <scope>TISSUE SPECIFICITY</scope>
    <scope>INTERACTION WITH PARD3B; F2RL2; GPSM1 AND GPSM2</scope>
    <source>
        <tissue>Kidney</tissue>
        <tissue>Small intestine</tissue>
    </source>
</reference>
<reference key="2">
    <citation type="submission" date="2005-08" db="EMBL/GenBank/DDBJ databases">
        <title>Identification of novel human genes predicted by combining multiple gene finders.</title>
        <authorList>
            <person name="Totoki Y."/>
            <person name="Yada T."/>
            <person name="Sakaki Y."/>
            <person name="Takeda T."/>
        </authorList>
    </citation>
    <scope>NUCLEOTIDE SEQUENCE [LARGE SCALE MRNA] (ISOFORMS 2; 3; 4 AND 5)</scope>
</reference>
<reference key="3">
    <citation type="journal article" date="2006" name="Nature">
        <title>Human chromosome 11 DNA sequence and analysis including novel gene identification.</title>
        <authorList>
            <person name="Taylor T.D."/>
            <person name="Noguchi H."/>
            <person name="Totoki Y."/>
            <person name="Toyoda A."/>
            <person name="Kuroki Y."/>
            <person name="Dewar K."/>
            <person name="Lloyd C."/>
            <person name="Itoh T."/>
            <person name="Takeda T."/>
            <person name="Kim D.-W."/>
            <person name="She X."/>
            <person name="Barlow K.F."/>
            <person name="Bloom T."/>
            <person name="Bruford E."/>
            <person name="Chang J.L."/>
            <person name="Cuomo C.A."/>
            <person name="Eichler E."/>
            <person name="FitzGerald M.G."/>
            <person name="Jaffe D.B."/>
            <person name="LaButti K."/>
            <person name="Nicol R."/>
            <person name="Park H.-S."/>
            <person name="Seaman C."/>
            <person name="Sougnez C."/>
            <person name="Yang X."/>
            <person name="Zimmer A.R."/>
            <person name="Zody M.C."/>
            <person name="Birren B.W."/>
            <person name="Nusbaum C."/>
            <person name="Fujiyama A."/>
            <person name="Hattori M."/>
            <person name="Rogers J."/>
            <person name="Lander E.S."/>
            <person name="Sakaki Y."/>
        </authorList>
    </citation>
    <scope>NUCLEOTIDE SEQUENCE [LARGE SCALE GENOMIC DNA]</scope>
</reference>
<reference key="4">
    <citation type="journal article" date="2004" name="Genome Res.">
        <title>The status, quality, and expansion of the NIH full-length cDNA project: the Mammalian Gene Collection (MGC).</title>
        <authorList>
            <consortium name="The MGC Project Team"/>
        </authorList>
    </citation>
    <scope>NUCLEOTIDE SEQUENCE [LARGE SCALE MRNA] (ISOFORM 6)</scope>
</reference>
<reference key="5">
    <citation type="journal article" date="2003" name="Int. J. Mol. Med.">
        <title>Identification and characterization of human Inscuteable gene in silico.</title>
        <authorList>
            <person name="Katoh M."/>
            <person name="Katoh M."/>
        </authorList>
    </citation>
    <scope>IDENTIFICATION</scope>
    <scope>TISSUE SPECIFICITY</scope>
    <scope>DEVELOPMENTAL STAGE</scope>
</reference>
<reference evidence="10" key="6">
    <citation type="journal article" date="2011" name="Proc. Natl. Acad. Sci. U.S.A.">
        <title>Structural basis for interaction between the conserved cell polarity proteins Inscuteable and Leu-Gly-Asn repeat-enriched protein (LGN).</title>
        <authorList>
            <person name="Yuzawa S."/>
            <person name="Kamakura S."/>
            <person name="Iwakiri Y."/>
            <person name="Hayase J."/>
            <person name="Sumimoto H."/>
        </authorList>
    </citation>
    <scope>X-RAY CRYSTALLOGRAPHY (2.60 ANGSTROMS) OF 70-116 IN COMPLEX WITH GPSM2</scope>
    <scope>INTERACTION WITH GPSM2 AND GPSM1</scope>
    <scope>SUBCELLULAR LOCATION</scope>
    <scope>MUTAGENESIS OF TRP-78; GLU-89 AND LYS-97</scope>
</reference>